<reference key="1">
    <citation type="journal article" date="1992" name="Virology">
        <title>The complete nucleotide sequence of a feline calicivirus.</title>
        <authorList>
            <person name="Carter M.J."/>
            <person name="Milton I.D."/>
            <person name="Meanger J."/>
            <person name="Bennett M."/>
            <person name="Gaskell R.M."/>
            <person name="Turner P.C."/>
        </authorList>
    </citation>
    <scope>NUCLEOTIDE SEQUENCE [GENOMIC RNA]</scope>
</reference>
<reference key="2">
    <citation type="journal article" date="1992" name="Biochem. Soc. Trans.">
        <title>Cloning and sequence determination of the feline calicivirus strain F9.</title>
        <authorList>
            <person name="Meanger J."/>
            <person name="Carter M.J."/>
            <person name="Gaskell R.M."/>
            <person name="Turner P.C."/>
        </authorList>
    </citation>
    <scope>NUCLEOTIDE SEQUENCE [GENOMIC RNA]</scope>
</reference>
<reference key="3">
    <citation type="journal article" date="1992" name="Arch. Virol.">
        <title>Identification and sequence determination of the capsid protein gene of feline calicivirus.</title>
        <authorList>
            <person name="Carter M.J."/>
            <person name="Milton I.D."/>
            <person name="Turner P.C."/>
            <person name="Meanger J."/>
            <person name="Bennett M."/>
            <person name="Gaskell R.M."/>
        </authorList>
    </citation>
    <scope>NUCLEOTIDE SEQUENCE [GENOMIC RNA] OF 1098-1763</scope>
</reference>
<reference key="4">
    <citation type="journal article" date="1997" name="J. Gen. Virol.">
        <title>Identification of a protein linked to the genomic and subgenomic mRNAs of feline calicivirus and its role in translation.</title>
        <authorList>
            <person name="Herbert T.P."/>
            <person name="Brierley I."/>
            <person name="Brown T.D."/>
        </authorList>
    </citation>
    <scope>FUNCTION (VIRAL GENOME-LINKED PROTEIN)</scope>
</reference>
<reference key="5">
    <citation type="journal article" date="2005" name="EMBO Rep.">
        <title>Calicivirus translation initiation requires an interaction between VPg and eIF4E.</title>
        <authorList>
            <person name="Goodfellow I."/>
            <person name="Chaudhry Y."/>
            <person name="Gioldasi I."/>
            <person name="Gerondopoulos A."/>
            <person name="Natoni A."/>
            <person name="Labrie L."/>
            <person name="Laliberte J.F."/>
            <person name="Roberts L."/>
        </authorList>
    </citation>
    <scope>INTERACTION WITH HOST EIF4E (VIRAL GENOME-LINKED PROTEIN)</scope>
    <scope>FUNCTION (VIRAL GENOME-LINKED PROTEIN)</scope>
</reference>
<reference key="6">
    <citation type="journal article" date="2016" name="PeerJ">
        <title>Protein-RNA linkage and posttranslational modifications of feline calicivirus and murine norovirus VPg proteins.</title>
        <authorList>
            <person name="Olspert A."/>
            <person name="Hosmillo M."/>
            <person name="Chaudhry Y."/>
            <person name="Peil L."/>
            <person name="Truve E."/>
            <person name="Goodfellow I."/>
        </authorList>
    </citation>
    <scope>COVALENT RNA LINKAGE AT TYR-984 (VIRAL GENOME-LINKED PROTEIN)</scope>
    <scope>PHOSPHORYLATION AT THR-1040 AND SER-1067</scope>
</reference>
<reference evidence="16" key="7">
    <citation type="journal article" date="2013" name="J. Virol.">
        <title>Structures of the compact helical core domains of feline calicivirus and murine norovirus VPg proteins.</title>
        <authorList>
            <person name="Leen E.N."/>
            <person name="Kwok K.Y."/>
            <person name="Birtley J.R."/>
            <person name="Simpson P.J."/>
            <person name="Subba-Reddy C.V."/>
            <person name="Chaudhry Y."/>
            <person name="Sosnovtsev S.V."/>
            <person name="Green K.Y."/>
            <person name="Prater S.N."/>
            <person name="Tong M."/>
            <person name="Young J.C."/>
            <person name="Chung L.M."/>
            <person name="Marchant J."/>
            <person name="Roberts L.O."/>
            <person name="Kao C.C."/>
            <person name="Matthews S."/>
            <person name="Goodfellow I.G."/>
            <person name="Curry S."/>
        </authorList>
    </citation>
    <scope>STRUCTURE BY NMR OF 969-1039</scope>
    <scope>DOMAIN (VIRAL GENOME-LINKED PROTEIN)</scope>
</reference>
<proteinExistence type="evidence at protein level"/>
<comment type="function">
    <molecule>NS2</molecule>
    <text evidence="2 4">Together with NTPase and NS4, initiates the formation of the replication complex (By similarity). Induces the proliferation of the host smooth ER membranes forming long tubular structures (By similarity). These remodeled membranes probably form the viral factories that contain the replication complex (By similarity).</text>
</comment>
<comment type="function">
    <molecule>NTPase</molecule>
    <text evidence="2 3 4">Displays NTPase activity, but no helicase activity (By similarity). Induces the formation of convoluted membranes derived from the host ER (By similarity). These remodeled membranes probably form the viral factories that contain the replication complex (By similarity). Together with NS2 and NS4, initiates the formation of the replication complex (By similarity).</text>
</comment>
<comment type="function">
    <molecule>NS4</molecule>
    <text evidence="2 4">Probable key protein responsible for the formation of membrane alterations by the virus (By similarity). Induces the formation of convoluted membranes derived from the host ER (By similarity). These remodeled membranes probably form the viral factories that contain the replication complex (By similarity). Together with NS2 and NTPase, initiates the formation of the replication complex (By similarity).</text>
</comment>
<comment type="function">
    <molecule>Viral genome-linked protein</molecule>
    <text evidence="10 13 15">Viral genome-linked protein is covalently linked to the 5'-end of the positive-strand, negative-strand genomic RNAs and subgenomic RNA (PubMed:16142217, PubMed:9152420). Acts as a genome-linked replication primer (PubMed:16142217, PubMed:9152420). May recruit ribosome to viral RNA thereby promoting viral proteins translation (PubMed:16142217). Interacts with host translation initiation complex to allow the translation of viral proteins (Probable).</text>
</comment>
<comment type="function">
    <molecule>Protease-polymerase p76</molecule>
    <text evidence="4">Protease-polymerase p76 processes the polyprotein: Pro-Pol is first released by autocleavage, then all other proteins are cleaved (By similarity). Cleaves host translation initiation factor eIF4G1, eIF4G2 and PABP1 thereby inducing a shutdown of host protein synthesis (By similarity). This shutdown may not prevent viral mRNA from being translated since viral Vpg replaces the cap (By similarity). It is also an RNA-directed RNA polymerase which replicates genomic and antigenomic viral RNA by recognizing specific signals (By similarity). Also transcribes a subgenomic mRNA by initiating RNA synthesis internally on antigenomic RNA (By similarity). This sgRNA codes for structural proteins. Catalyzes the covalent attachment VPg with viral RNAs (By similarity). Cleaves host G3BP1 thereby preventing the assembly of host stress granules (By similarity).</text>
</comment>
<comment type="catalytic activity">
    <molecule>NTPase</molecule>
    <reaction evidence="3">
        <text>a ribonucleoside 5'-triphosphate + H2O = a ribonucleoside 5'-diphosphate + phosphate + H(+)</text>
        <dbReference type="Rhea" id="RHEA:23680"/>
        <dbReference type="ChEBI" id="CHEBI:15377"/>
        <dbReference type="ChEBI" id="CHEBI:15378"/>
        <dbReference type="ChEBI" id="CHEBI:43474"/>
        <dbReference type="ChEBI" id="CHEBI:57930"/>
        <dbReference type="ChEBI" id="CHEBI:61557"/>
        <dbReference type="EC" id="3.6.1.15"/>
    </reaction>
</comment>
<comment type="catalytic activity">
    <molecule>Protease-polymerase p76</molecule>
    <reaction evidence="7">
        <text>RNA(n) + a ribonucleoside 5'-triphosphate = RNA(n+1) + diphosphate</text>
        <dbReference type="Rhea" id="RHEA:21248"/>
        <dbReference type="Rhea" id="RHEA-COMP:14527"/>
        <dbReference type="Rhea" id="RHEA-COMP:17342"/>
        <dbReference type="ChEBI" id="CHEBI:33019"/>
        <dbReference type="ChEBI" id="CHEBI:61557"/>
        <dbReference type="ChEBI" id="CHEBI:140395"/>
        <dbReference type="EC" id="2.7.7.48"/>
    </reaction>
</comment>
<comment type="catalytic activity">
    <molecule>Protease-polymerase p76</molecule>
    <reaction evidence="9">
        <text>Endopeptidase with a preference for cleavage when the P1 position is occupied by Glu-|-Xaa and the P1' position is occupied by Gly-|-Yaa.</text>
        <dbReference type="EC" id="3.4.22.66"/>
    </reaction>
</comment>
<comment type="subunit">
    <molecule>NS2</molecule>
    <text evidence="4">Homodimer (By similarity). Interacts with NTPase, protein p30 and protease-polymerase p76 (By similarity).</text>
</comment>
<comment type="subunit">
    <molecule>Viral genome-linked protein</molecule>
    <text evidence="4 10">Interacts with capsid protein VP1 and protease-polymerase p76 (By similarity). Interacts with host IEF4e; this interaction plays a role in translation of viral proteins (PubMed:16142217).</text>
</comment>
<comment type="subunit">
    <molecule>Protease-polymerase p76</molecule>
    <text evidence="4">Homooligomer (By similarity). Interacts with Vpg, protein p32 and may interact with capsid protein VP1 (By similarity).</text>
</comment>
<comment type="subcellular location">
    <molecule>NS2</molecule>
    <subcellularLocation>
        <location evidence="4">Host endoplasmic reticulum membrane</location>
    </subcellularLocation>
</comment>
<comment type="subcellular location">
    <molecule>NS4</molecule>
    <subcellularLocation>
        <location evidence="4">Host endoplasmic reticulum membrane</location>
    </subcellularLocation>
</comment>
<comment type="subcellular location">
    <molecule>NTPase</molecule>
    <subcellularLocation>
        <location evidence="4">Host endoplasmic reticulum membrane</location>
    </subcellularLocation>
</comment>
<comment type="domain">
    <molecule>Viral genome-linked protein</molecule>
    <text evidence="11">Contains a compact core domain in the N-terminus half that is composed of a three-helix bundle.</text>
</comment>
<comment type="domain">
    <molecule>Protease-polymerase p76</molecule>
    <text evidence="14">Protease-polymerase is composed of two domains displaying two different catalytic activity. These activities may act independently.</text>
</comment>
<comment type="PTM">
    <molecule>Genome polyprotein</molecule>
    <text evidence="4">Specific enzymatic cleavages in vivo yield mature proteins (By similarity). Pro-Pol is first autocatalytically cleaved, then processes the whole polyprotein (By similarity).</text>
</comment>
<comment type="PTM">
    <molecule>Viral genome-linked protein</molecule>
    <text evidence="2 12">VPg is uridylylated by the polymerase and is covalently attached to the 5'-end of the polyadenylated genomic and subgenomic RNAs (PubMed:27375966). This uridylylated form acts as a nucleotide-peptide primer for the polymerase (By similarity).</text>
</comment>
<evidence type="ECO:0000250" key="1"/>
<evidence type="ECO:0000250" key="2">
    <source>
        <dbReference type="UniProtKB" id="P54634"/>
    </source>
</evidence>
<evidence type="ECO:0000250" key="3">
    <source>
        <dbReference type="UniProtKB" id="Q04544"/>
    </source>
</evidence>
<evidence type="ECO:0000250" key="4">
    <source>
        <dbReference type="UniProtKB" id="Q66914"/>
    </source>
</evidence>
<evidence type="ECO:0000250" key="5">
    <source>
        <dbReference type="UniProtKB" id="Q69014"/>
    </source>
</evidence>
<evidence type="ECO:0000250" key="6">
    <source>
        <dbReference type="UniProtKB" id="Q6XDK8"/>
    </source>
</evidence>
<evidence type="ECO:0000255" key="7">
    <source>
        <dbReference type="PROSITE-ProRule" id="PRU00539"/>
    </source>
</evidence>
<evidence type="ECO:0000255" key="8">
    <source>
        <dbReference type="PROSITE-ProRule" id="PRU00551"/>
    </source>
</evidence>
<evidence type="ECO:0000255" key="9">
    <source>
        <dbReference type="PROSITE-ProRule" id="PRU01242"/>
    </source>
</evidence>
<evidence type="ECO:0000269" key="10">
    <source>
    </source>
</evidence>
<evidence type="ECO:0000269" key="11">
    <source>
    </source>
</evidence>
<evidence type="ECO:0000269" key="12">
    <source>
    </source>
</evidence>
<evidence type="ECO:0000269" key="13">
    <source>
    </source>
</evidence>
<evidence type="ECO:0000305" key="14"/>
<evidence type="ECO:0000305" key="15">
    <source>
    </source>
</evidence>
<evidence type="ECO:0007744" key="16">
    <source>
        <dbReference type="PDB" id="2M4H"/>
    </source>
</evidence>
<evidence type="ECO:0007829" key="17">
    <source>
        <dbReference type="PDB" id="2M4H"/>
    </source>
</evidence>
<sequence>MSQTLSFVLKTHSVRKDFVHSVKLTLARRRDLQYIYNKLSRTIRAEACPSCASYDVCPNCTSGDVPDDGSSTMSIPSWEDVTKSSTYSLLLSEDTSDELCPEDLVNVAAHIRKALSTQSHPANAEMCKEQLTFLLVMAEAMLPQRSRASIPLHQQHTAARLEWREKFFSKPLDFLLERVGVSKDILQTTAIWKIILEKACYCKSYGEQWFTAAKQKLREMKNFESDTLKPLIGGFIDGLRFLTVDNPNPMGFLPKLIGLVKPLNLAMIIDNHENTISGWIITLTAIMELYNITECTIDIITSVITAFYDKIGKATKFYSCVKALFTGFRSEDVANSFWYMAAAILCYLITGLIPNNGRFSKIKACLAGATTLVSGIVATQKLAAMFATWNSESIVNELSARTVALSELNNPTTTSDTDSVERLLELAKILHEEIKIHTLNPIMQSYNPILRNLMSTLDGVITSCNKRKAIARKRQVPVCYILTGPPGCGKTTAAQALAKKLSDQEPSVINLDVDHHDTYTGNEVCIIDEFDSSDKVDYANFVIGMVNSAPMVLNCDMLENKGKLFTSKYIIMTSNSETPVKPSSKRAGAFYRRVTIIDVTNPFVESHKRARPGTSVPRSCYKKNFSHLSLAKRGAECWCKEYVLDPKGLQHQSMKAPPPTFLNIDSLAQTMKQDFLLKNMAFEAEDGCAEHRYGFVCQQEEVETVRRLLNAVRARMNATFTVCVGPETSHSIGCTAHVLTPNETFNGKKFVVSRCNEASLSALEGNCVKSALGVCMSDKDLTHLCHFIKGKIVNDSVRLDELPANQHVVTVNSVFDLAWAVRRHLTLAGQFQAIRAAYDVLTVPDKIPAMLRHWMDETSFSDDHVVTQFVTPGGIVILESCGGARIWALGRNVIRAGGVTATPTGGCVRLMGLSAPTMPWSEIFRELFSLLGRIWSSVKVSALVLTALGMYASRFRPKSEAKGKTKLKIGTYRGRGVALTDDEYDEWREHNASRKLDLSVEDFLMLRHRAALGADDNDAVKFRSWWNSRTKMANDYEDVTVIGKGGVKHEKIRTNTLKAVDRGYDVSFAEESGPGTKFHKNAIGSVTDVCGEHKGYCIHMGHGVYASVAHVVKGDSFFLGERIFDLKTNGEFCCFRSTKILPSAAPFFSGKPTRDPWGSPVATEWKPKMYTTTSGKILGCFATTSTETHPGDCGLPYIDDNGRVTGLHTGSGGPKTPSAKLVVPYVHIDMKTKSVTAQKYDVTKPDISYKGLICKQLDEIRIIPKGTRLHVSPAHTEDYQECSHQPASLGSGDPRCPKSLTAIVVDSLKPYCENVEGPPHDVLHRVQKMLIDHLSGFVPMNISSETSMLSAFHKLNHDTSCGPYLGGRKKDHMANGEPDKQLLDLLSAKWKLATQGIALPHEYTIGLKDELRPVEKVSEGKRRMIWGCDVGVATVCAAAFKGVSDAITANHQYGPIQVGINMDSPSVEALFQRIKSAAKVFAVDYSKWDSTQSPRVSAASIDILRYFSDRSPIVDSASNTLKSPPVAIFNGVAVKVSSGLPSGMPLTSVINSLNHCLYVGCAILQSLEAKAIPVTWNLFSTFDIMTYGDDGVYMFPIMYASISDQIFGNLSSYGLKPTRVDKSVGAIEPIDPDSVVFLKRTITRTPQGIRGLLDRSSIIRQFYYIKGENSDDWKSPPKHIDPTSRGQQLWNACLYASQHGLEFFNKVYRLAERAVEYEELHFEPPTYASALDHYNSQFNGVEARSDQIDSSGMTALHCDVFEV</sequence>
<accession>P27409</accession>
<organismHost>
    <name type="scientific">Felidae</name>
    <name type="common">cat family</name>
    <dbReference type="NCBI Taxonomy" id="9681"/>
</organismHost>
<feature type="chain" id="PRO_0000341997" description="Genome polyprotein">
    <location>
        <begin position="1"/>
        <end position="1763"/>
    </location>
</feature>
<feature type="chain" id="PRO_0000036900" description="NS1">
    <location>
        <begin position="1"/>
        <end position="46"/>
    </location>
</feature>
<feature type="chain" id="PRO_0000036901" description="NS2">
    <location>
        <begin position="47"/>
        <end position="331"/>
    </location>
</feature>
<feature type="chain" id="PRO_0000036902" description="NTPase">
    <location>
        <begin position="332"/>
        <end position="685"/>
    </location>
</feature>
<feature type="chain" id="PRO_0000036903" description="NS4">
    <location>
        <begin position="686"/>
        <end position="960"/>
    </location>
</feature>
<feature type="chain" id="PRO_0000036904" description="Viral genome-linked protein">
    <location>
        <begin position="961"/>
        <end position="1071"/>
    </location>
</feature>
<feature type="chain" id="PRO_0000036905" description="Protease-polymerase p76">
    <location>
        <begin position="1072"/>
        <end position="1763"/>
    </location>
</feature>
<feature type="domain" description="SF3 helicase" evidence="8">
    <location>
        <begin position="458"/>
        <end position="614"/>
    </location>
</feature>
<feature type="domain" description="Peptidase C24" evidence="9">
    <location>
        <begin position="1073"/>
        <end position="1229"/>
    </location>
</feature>
<feature type="domain" description="RdRp catalytic" evidence="7">
    <location>
        <begin position="1478"/>
        <end position="1603"/>
    </location>
</feature>
<feature type="region of interest" description="Acidic" evidence="11">
    <location>
        <begin position="981"/>
        <end position="986"/>
    </location>
</feature>
<feature type="active site" description="For 3CLpro activity" evidence="9">
    <location>
        <position position="1110"/>
    </location>
</feature>
<feature type="active site" description="For 3CLpro activity" evidence="9">
    <location>
        <position position="1131"/>
    </location>
</feature>
<feature type="active site" description="For 3CLpro activity" evidence="9">
    <location>
        <position position="1193"/>
    </location>
</feature>
<feature type="binding site" evidence="8">
    <location>
        <begin position="484"/>
        <end position="491"/>
    </location>
    <ligand>
        <name>ATP</name>
        <dbReference type="ChEBI" id="CHEBI:30616"/>
    </ligand>
</feature>
<feature type="site" description="Cleavage; by Pro-Pol" evidence="1">
    <location>
        <begin position="46"/>
        <end position="47"/>
    </location>
</feature>
<feature type="site" description="Cleavage; by Pro-Pol" evidence="1">
    <location>
        <begin position="331"/>
        <end position="332"/>
    </location>
</feature>
<feature type="site" description="Cleavage; by Pro-Pol" evidence="1">
    <location>
        <begin position="685"/>
        <end position="686"/>
    </location>
</feature>
<feature type="site" description="Cleavage; by Pro-Pol" evidence="1">
    <location>
        <begin position="960"/>
        <end position="961"/>
    </location>
</feature>
<feature type="site" description="Cleavage; by Pro-Pol" evidence="1">
    <location>
        <begin position="1071"/>
        <end position="1072"/>
    </location>
</feature>
<feature type="modified residue" description="O-(5'-phospho-RNA)-tyrosine" evidence="12">
    <location>
        <position position="984"/>
    </location>
</feature>
<feature type="modified residue" description="Phosphothreonine" evidence="12">
    <location>
        <position position="1040"/>
    </location>
</feature>
<feature type="modified residue" description="Phosphoserine" evidence="12">
    <location>
        <position position="1067"/>
    </location>
</feature>
<feature type="strand" evidence="17">
    <location>
        <begin position="973"/>
        <end position="976"/>
    </location>
</feature>
<feature type="helix" evidence="17">
    <location>
        <begin position="981"/>
        <end position="993"/>
    </location>
</feature>
<feature type="helix" evidence="17">
    <location>
        <begin position="1000"/>
        <end position="1012"/>
    </location>
</feature>
<feature type="helix" evidence="17">
    <location>
        <begin position="1017"/>
        <end position="1029"/>
    </location>
</feature>
<name>POLG_FCVF9</name>
<keyword id="KW-0002">3D-structure</keyword>
<keyword id="KW-0067">ATP-binding</keyword>
<keyword id="KW-0191">Covalent protein-RNA linkage</keyword>
<keyword id="KW-1262">Eukaryotic host gene expression shutoff by virus</keyword>
<keyword id="KW-1193">Eukaryotic host translation shutoff by virus</keyword>
<keyword id="KW-1038">Host endoplasmic reticulum</keyword>
<keyword id="KW-1190">Host gene expression shutoff by virus</keyword>
<keyword id="KW-1043">Host membrane</keyword>
<keyword id="KW-0945">Host-virus interaction</keyword>
<keyword id="KW-0378">Hydrolase</keyword>
<keyword id="KW-0472">Membrane</keyword>
<keyword id="KW-0547">Nucleotide-binding</keyword>
<keyword id="KW-0548">Nucleotidyltransferase</keyword>
<keyword id="KW-0597">Phosphoprotein</keyword>
<keyword id="KW-0645">Protease</keyword>
<keyword id="KW-0696">RNA-directed RNA polymerase</keyword>
<keyword id="KW-0788">Thiol protease</keyword>
<keyword id="KW-0808">Transferase</keyword>
<keyword id="KW-0693">Viral RNA replication</keyword>
<organism>
    <name type="scientific">Feline calicivirus (strain F9)</name>
    <name type="common">FCV</name>
    <dbReference type="NCBI Taxonomy" id="11981"/>
    <lineage>
        <taxon>Viruses</taxon>
        <taxon>Riboviria</taxon>
        <taxon>Orthornavirae</taxon>
        <taxon>Pisuviricota</taxon>
        <taxon>Pisoniviricetes</taxon>
        <taxon>Picornavirales</taxon>
        <taxon>Caliciviridae</taxon>
        <taxon>Vesivirus</taxon>
        <taxon>Feline calicivirus</taxon>
    </lineage>
</organism>
<gene>
    <name type="ORF">ORF1</name>
</gene>
<dbReference type="EC" id="3.6.1.15" evidence="3"/>
<dbReference type="EC" id="2.7.7.48" evidence="5"/>
<dbReference type="EC" id="3.4.22.66" evidence="6"/>
<dbReference type="EMBL" id="M86379">
    <property type="protein sequence ID" value="AAA79326.1"/>
    <property type="molecule type" value="Genomic_RNA"/>
</dbReference>
<dbReference type="EMBL" id="Z11536">
    <property type="protein sequence ID" value="CAA77635.1"/>
    <property type="molecule type" value="Genomic_RNA"/>
</dbReference>
<dbReference type="PIR" id="A43382">
    <property type="entry name" value="RRWWF9"/>
</dbReference>
<dbReference type="PDB" id="2M4H">
    <property type="method" value="NMR"/>
    <property type="chains" value="A=969-1039"/>
</dbReference>
<dbReference type="PDBsum" id="2M4H"/>
<dbReference type="BMRB" id="P27409"/>
<dbReference type="SMR" id="P27409"/>
<dbReference type="MEROPS" id="C24.002"/>
<dbReference type="BRENDA" id="3.4.22.66">
    <property type="organism ID" value="8732"/>
</dbReference>
<dbReference type="EvolutionaryTrace" id="P27409"/>
<dbReference type="Proteomes" id="UP000008762">
    <property type="component" value="Segment"/>
</dbReference>
<dbReference type="GO" id="GO:0044167">
    <property type="term" value="C:host cell endoplasmic reticulum membrane"/>
    <property type="evidence" value="ECO:0007669"/>
    <property type="project" value="UniProtKB-SubCell"/>
</dbReference>
<dbReference type="GO" id="GO:0016020">
    <property type="term" value="C:membrane"/>
    <property type="evidence" value="ECO:0007669"/>
    <property type="project" value="UniProtKB-KW"/>
</dbReference>
<dbReference type="GO" id="GO:0005524">
    <property type="term" value="F:ATP binding"/>
    <property type="evidence" value="ECO:0007669"/>
    <property type="project" value="UniProtKB-KW"/>
</dbReference>
<dbReference type="GO" id="GO:0016887">
    <property type="term" value="F:ATP hydrolysis activity"/>
    <property type="evidence" value="ECO:0007669"/>
    <property type="project" value="InterPro"/>
</dbReference>
<dbReference type="GO" id="GO:0004197">
    <property type="term" value="F:cysteine-type endopeptidase activity"/>
    <property type="evidence" value="ECO:0007669"/>
    <property type="project" value="InterPro"/>
</dbReference>
<dbReference type="GO" id="GO:0003723">
    <property type="term" value="F:RNA binding"/>
    <property type="evidence" value="ECO:0007669"/>
    <property type="project" value="InterPro"/>
</dbReference>
<dbReference type="GO" id="GO:0003724">
    <property type="term" value="F:RNA helicase activity"/>
    <property type="evidence" value="ECO:0007669"/>
    <property type="project" value="InterPro"/>
</dbReference>
<dbReference type="GO" id="GO:0003968">
    <property type="term" value="F:RNA-directed RNA polymerase activity"/>
    <property type="evidence" value="ECO:0007669"/>
    <property type="project" value="UniProtKB-KW"/>
</dbReference>
<dbReference type="GO" id="GO:0006351">
    <property type="term" value="P:DNA-templated transcription"/>
    <property type="evidence" value="ECO:0007669"/>
    <property type="project" value="InterPro"/>
</dbReference>
<dbReference type="GO" id="GO:0006508">
    <property type="term" value="P:proteolysis"/>
    <property type="evidence" value="ECO:0007669"/>
    <property type="project" value="UniProtKB-KW"/>
</dbReference>
<dbReference type="GO" id="GO:0039657">
    <property type="term" value="P:symbiont-mediated suppression of host gene expression"/>
    <property type="evidence" value="ECO:0007669"/>
    <property type="project" value="UniProtKB-KW"/>
</dbReference>
<dbReference type="GO" id="GO:0039694">
    <property type="term" value="P:viral RNA genome replication"/>
    <property type="evidence" value="ECO:0007669"/>
    <property type="project" value="InterPro"/>
</dbReference>
<dbReference type="CDD" id="cd00009">
    <property type="entry name" value="AAA"/>
    <property type="match status" value="1"/>
</dbReference>
<dbReference type="CDD" id="cd23192">
    <property type="entry name" value="Caliciviridae_RdRp"/>
    <property type="match status" value="1"/>
</dbReference>
<dbReference type="Gene3D" id="1.10.260.110">
    <property type="match status" value="1"/>
</dbReference>
<dbReference type="Gene3D" id="1.20.960.20">
    <property type="match status" value="1"/>
</dbReference>
<dbReference type="Gene3D" id="3.30.70.270">
    <property type="match status" value="1"/>
</dbReference>
<dbReference type="Gene3D" id="6.10.140.320">
    <property type="match status" value="1"/>
</dbReference>
<dbReference type="Gene3D" id="6.10.250.3230">
    <property type="match status" value="1"/>
</dbReference>
<dbReference type="Gene3D" id="3.40.50.300">
    <property type="entry name" value="P-loop containing nucleotide triphosphate hydrolases"/>
    <property type="match status" value="1"/>
</dbReference>
<dbReference type="InterPro" id="IPR003593">
    <property type="entry name" value="AAA+_ATPase"/>
</dbReference>
<dbReference type="InterPro" id="IPR043502">
    <property type="entry name" value="DNA/RNA_pol_sf"/>
</dbReference>
<dbReference type="InterPro" id="IPR004004">
    <property type="entry name" value="Helic/Pol/Pept_Calicivir-typ"/>
</dbReference>
<dbReference type="InterPro" id="IPR000605">
    <property type="entry name" value="Helicase_SF3_ssDNA/RNA_vir"/>
</dbReference>
<dbReference type="InterPro" id="IPR014759">
    <property type="entry name" value="Helicase_SF3_ssRNA_vir"/>
</dbReference>
<dbReference type="InterPro" id="IPR027417">
    <property type="entry name" value="P-loop_NTPase"/>
</dbReference>
<dbReference type="InterPro" id="IPR000317">
    <property type="entry name" value="Peptidase_C24"/>
</dbReference>
<dbReference type="InterPro" id="IPR009003">
    <property type="entry name" value="Peptidase_S1_PA"/>
</dbReference>
<dbReference type="InterPro" id="IPR043128">
    <property type="entry name" value="Rev_trsase/Diguanyl_cyclase"/>
</dbReference>
<dbReference type="InterPro" id="IPR001205">
    <property type="entry name" value="RNA-dir_pol_C"/>
</dbReference>
<dbReference type="InterPro" id="IPR007094">
    <property type="entry name" value="RNA-dir_pol_PSvirus"/>
</dbReference>
<dbReference type="InterPro" id="IPR049434">
    <property type="entry name" value="VPg"/>
</dbReference>
<dbReference type="Pfam" id="PF03510">
    <property type="entry name" value="Peptidase_C24"/>
    <property type="match status" value="1"/>
</dbReference>
<dbReference type="Pfam" id="PF00680">
    <property type="entry name" value="RdRP_1"/>
    <property type="match status" value="1"/>
</dbReference>
<dbReference type="Pfam" id="PF00910">
    <property type="entry name" value="RNA_helicase"/>
    <property type="match status" value="1"/>
</dbReference>
<dbReference type="Pfam" id="PF20915">
    <property type="entry name" value="VPg"/>
    <property type="match status" value="1"/>
</dbReference>
<dbReference type="PRINTS" id="PR00916">
    <property type="entry name" value="2CENDOPTASE"/>
</dbReference>
<dbReference type="PRINTS" id="PR00918">
    <property type="entry name" value="CALICVIRUSNS"/>
</dbReference>
<dbReference type="SMART" id="SM00382">
    <property type="entry name" value="AAA"/>
    <property type="match status" value="1"/>
</dbReference>
<dbReference type="SUPFAM" id="SSF56672">
    <property type="entry name" value="DNA/RNA polymerases"/>
    <property type="match status" value="1"/>
</dbReference>
<dbReference type="SUPFAM" id="SSF52540">
    <property type="entry name" value="P-loop containing nucleoside triphosphate hydrolases"/>
    <property type="match status" value="2"/>
</dbReference>
<dbReference type="SUPFAM" id="SSF50494">
    <property type="entry name" value="Trypsin-like serine proteases"/>
    <property type="match status" value="1"/>
</dbReference>
<dbReference type="PROSITE" id="PS51894">
    <property type="entry name" value="CV_3CL_PRO"/>
    <property type="match status" value="1"/>
</dbReference>
<dbReference type="PROSITE" id="PS50507">
    <property type="entry name" value="RDRP_SSRNA_POS"/>
    <property type="match status" value="1"/>
</dbReference>
<dbReference type="PROSITE" id="PS51218">
    <property type="entry name" value="SF3_HELICASE_2"/>
    <property type="match status" value="1"/>
</dbReference>
<protein>
    <recommendedName>
        <fullName>Genome polyprotein</fullName>
    </recommendedName>
    <component>
        <recommendedName>
            <fullName>NS1</fullName>
        </recommendedName>
        <alternativeName>
            <fullName>Protein p5.6</fullName>
        </alternativeName>
    </component>
    <component>
        <recommendedName>
            <fullName>NS2</fullName>
        </recommendedName>
        <alternativeName>
            <fullName>Protein p32</fullName>
        </alternativeName>
    </component>
    <component>
        <recommendedName>
            <fullName>NTPase</fullName>
            <ecNumber evidence="3">3.6.1.15</ecNumber>
        </recommendedName>
        <alternativeName>
            <fullName evidence="14">NS3</fullName>
        </alternativeName>
        <alternativeName>
            <fullName>p39</fullName>
        </alternativeName>
    </component>
    <component>
        <recommendedName>
            <fullName evidence="14">NS4</fullName>
        </recommendedName>
        <alternativeName>
            <fullName evidence="14">3A-like protein p30</fullName>
        </alternativeName>
        <alternativeName>
            <fullName>Protein p30</fullName>
        </alternativeName>
    </component>
    <component>
        <recommendedName>
            <fullName>Viral genome-linked protein</fullName>
            <shortName>VPg</shortName>
        </recommendedName>
        <alternativeName>
            <fullName evidence="14">NS5</fullName>
        </alternativeName>
        <alternativeName>
            <fullName>p13</fullName>
        </alternativeName>
    </component>
    <component>
        <recommendedName>
            <fullName>Protease-polymerase p76</fullName>
            <shortName>Pro-Pol</shortName>
            <ecNumber evidence="5">2.7.7.48</ecNumber>
            <ecNumber evidence="6">3.4.22.66</ecNumber>
        </recommendedName>
        <alternativeName>
            <fullName evidence="14">NS6-7</fullName>
        </alternativeName>
    </component>
</protein>